<feature type="chain" id="PRO_0000146671" description="Small ribosomal subunit protein uS10m">
    <location>
        <begin position="1"/>
        <end position="110"/>
    </location>
</feature>
<proteinExistence type="evidence at transcript level"/>
<gene>
    <name type="primary">RPS10</name>
</gene>
<sequence>MTTKIRIVIRSFDHPFLENHFGGLPPYTWKIGLPESRVLYTVLRSPHIDKKSREQFEMEIKKKYLVIKTEKHELRKKFFWLKRQRLFGAQYEILFFCKTRSDKGKLQRLL</sequence>
<reference key="1">
    <citation type="journal article" date="1995" name="Curr. Genet.">
        <title>The gene for ribosomal protein S10 is present in mitochondria of pea and potato but absent from those of Arabidopsis and Oenothera.</title>
        <authorList>
            <person name="Knoop V."/>
            <person name="Ehrhardt T."/>
            <person name="Laettig K."/>
            <person name="Brennicke A."/>
        </authorList>
    </citation>
    <scope>NUCLEOTIDE SEQUENCE [GENOMIC DNA]</scope>
    <scope>RNA EDITING</scope>
    <source>
        <strain>cv. Progress</strain>
        <tissue>Seedling</tissue>
    </source>
</reference>
<keyword id="KW-0496">Mitochondrion</keyword>
<keyword id="KW-0687">Ribonucleoprotein</keyword>
<keyword id="KW-0689">Ribosomal protein</keyword>
<keyword id="KW-0691">RNA editing</keyword>
<evidence type="ECO:0000269" key="1">
    <source>
    </source>
</evidence>
<evidence type="ECO:0000305" key="2"/>
<comment type="subcellular location">
    <subcellularLocation>
        <location>Mitochondrion</location>
    </subcellularLocation>
</comment>
<comment type="RNA editing">
    <location>
        <position position="29" evidence="1"/>
    </location>
    <location>
        <position position="80" evidence="1"/>
    </location>
</comment>
<comment type="similarity">
    <text evidence="2">Belongs to the universal ribosomal protein uS10 family.</text>
</comment>
<name>RT10_PEA</name>
<protein>
    <recommendedName>
        <fullName evidence="2">Small ribosomal subunit protein uS10m</fullName>
    </recommendedName>
    <alternativeName>
        <fullName>Ribosomal protein S10, mitochondrial</fullName>
    </alternativeName>
</protein>
<dbReference type="EMBL" id="X80854">
    <property type="protein sequence ID" value="CAA56822.1"/>
    <property type="status" value="ALT_SEQ"/>
    <property type="molecule type" value="Genomic_DNA"/>
</dbReference>
<dbReference type="PIR" id="S55879">
    <property type="entry name" value="S55879"/>
</dbReference>
<dbReference type="SMR" id="P51428"/>
<dbReference type="GO" id="GO:0005739">
    <property type="term" value="C:mitochondrion"/>
    <property type="evidence" value="ECO:0007669"/>
    <property type="project" value="UniProtKB-SubCell"/>
</dbReference>
<dbReference type="GO" id="GO:1990904">
    <property type="term" value="C:ribonucleoprotein complex"/>
    <property type="evidence" value="ECO:0007669"/>
    <property type="project" value="UniProtKB-KW"/>
</dbReference>
<dbReference type="GO" id="GO:0005840">
    <property type="term" value="C:ribosome"/>
    <property type="evidence" value="ECO:0007669"/>
    <property type="project" value="UniProtKB-KW"/>
</dbReference>
<dbReference type="GO" id="GO:0003735">
    <property type="term" value="F:structural constituent of ribosome"/>
    <property type="evidence" value="ECO:0007669"/>
    <property type="project" value="InterPro"/>
</dbReference>
<dbReference type="GO" id="GO:0006412">
    <property type="term" value="P:translation"/>
    <property type="evidence" value="ECO:0007669"/>
    <property type="project" value="InterPro"/>
</dbReference>
<dbReference type="FunFam" id="3.30.70.600:FF:000007">
    <property type="entry name" value="Ribosomal protein S10"/>
    <property type="match status" value="1"/>
</dbReference>
<dbReference type="Gene3D" id="3.30.70.600">
    <property type="entry name" value="Ribosomal protein S10 domain"/>
    <property type="match status" value="1"/>
</dbReference>
<dbReference type="InterPro" id="IPR001848">
    <property type="entry name" value="Ribosomal_uS10"/>
</dbReference>
<dbReference type="InterPro" id="IPR027486">
    <property type="entry name" value="Ribosomal_uS10_dom"/>
</dbReference>
<dbReference type="InterPro" id="IPR036838">
    <property type="entry name" value="Ribosomal_uS10_dom_sf"/>
</dbReference>
<dbReference type="PANTHER" id="PTHR11700">
    <property type="entry name" value="30S RIBOSOMAL PROTEIN S10 FAMILY MEMBER"/>
    <property type="match status" value="1"/>
</dbReference>
<dbReference type="Pfam" id="PF00338">
    <property type="entry name" value="Ribosomal_S10"/>
    <property type="match status" value="1"/>
</dbReference>
<dbReference type="PRINTS" id="PR00971">
    <property type="entry name" value="RIBOSOMALS10"/>
</dbReference>
<dbReference type="SMART" id="SM01403">
    <property type="entry name" value="Ribosomal_S10"/>
    <property type="match status" value="1"/>
</dbReference>
<dbReference type="SUPFAM" id="SSF54999">
    <property type="entry name" value="Ribosomal protein S10"/>
    <property type="match status" value="1"/>
</dbReference>
<accession>P51428</accession>
<organism>
    <name type="scientific">Pisum sativum</name>
    <name type="common">Garden pea</name>
    <name type="synonym">Lathyrus oleraceus</name>
    <dbReference type="NCBI Taxonomy" id="3888"/>
    <lineage>
        <taxon>Eukaryota</taxon>
        <taxon>Viridiplantae</taxon>
        <taxon>Streptophyta</taxon>
        <taxon>Embryophyta</taxon>
        <taxon>Tracheophyta</taxon>
        <taxon>Spermatophyta</taxon>
        <taxon>Magnoliopsida</taxon>
        <taxon>eudicotyledons</taxon>
        <taxon>Gunneridae</taxon>
        <taxon>Pentapetalae</taxon>
        <taxon>rosids</taxon>
        <taxon>fabids</taxon>
        <taxon>Fabales</taxon>
        <taxon>Fabaceae</taxon>
        <taxon>Papilionoideae</taxon>
        <taxon>50 kb inversion clade</taxon>
        <taxon>NPAAA clade</taxon>
        <taxon>Hologalegina</taxon>
        <taxon>IRL clade</taxon>
        <taxon>Fabeae</taxon>
        <taxon>Pisum</taxon>
    </lineage>
</organism>
<geneLocation type="mitochondrion"/>